<protein>
    <recommendedName>
        <fullName evidence="1">Chromosomal replication initiator protein DnaA</fullName>
    </recommendedName>
</protein>
<keyword id="KW-0067">ATP-binding</keyword>
<keyword id="KW-0963">Cytoplasm</keyword>
<keyword id="KW-0235">DNA replication</keyword>
<keyword id="KW-0238">DNA-binding</keyword>
<keyword id="KW-0446">Lipid-binding</keyword>
<keyword id="KW-0547">Nucleotide-binding</keyword>
<keyword id="KW-1185">Reference proteome</keyword>
<feature type="chain" id="PRO_1000072154" description="Chromosomal replication initiator protein DnaA">
    <location>
        <begin position="1"/>
        <end position="455"/>
    </location>
</feature>
<feature type="region of interest" description="Domain I, interacts with DnaA modulators" evidence="1">
    <location>
        <begin position="1"/>
        <end position="82"/>
    </location>
</feature>
<feature type="region of interest" description="Domain II" evidence="1">
    <location>
        <begin position="82"/>
        <end position="117"/>
    </location>
</feature>
<feature type="region of interest" description="Domain III, AAA+ region" evidence="1">
    <location>
        <begin position="118"/>
        <end position="335"/>
    </location>
</feature>
<feature type="region of interest" description="Domain IV, binds dsDNA" evidence="1">
    <location>
        <begin position="336"/>
        <end position="455"/>
    </location>
</feature>
<feature type="binding site" evidence="1">
    <location>
        <position position="163"/>
    </location>
    <ligand>
        <name>ATP</name>
        <dbReference type="ChEBI" id="CHEBI:30616"/>
    </ligand>
</feature>
<feature type="binding site" evidence="1">
    <location>
        <position position="165"/>
    </location>
    <ligand>
        <name>ATP</name>
        <dbReference type="ChEBI" id="CHEBI:30616"/>
    </ligand>
</feature>
<feature type="binding site" evidence="1">
    <location>
        <position position="166"/>
    </location>
    <ligand>
        <name>ATP</name>
        <dbReference type="ChEBI" id="CHEBI:30616"/>
    </ligand>
</feature>
<feature type="binding site" evidence="1">
    <location>
        <position position="167"/>
    </location>
    <ligand>
        <name>ATP</name>
        <dbReference type="ChEBI" id="CHEBI:30616"/>
    </ligand>
</feature>
<accession>A6VK86</accession>
<gene>
    <name evidence="1" type="primary">dnaA</name>
    <name type="ordered locus">Asuc_0001</name>
</gene>
<sequence>MNRNTSSLWADCLLQLQDQVPADKFQMWLRPLQADISSPNQLTIYVQNFFSRQWVENNYLADITKLARQLTGNPDFVVKLVEGVKPAPKQNNIVTTKQNAETAVDSEQHLQSVEFKTGLNSNHLFENFVEGKSNQLARAVGIKVANNPGDKTANPLFLYGGTGLGKTHLLHAVGNGILANNPKARVLYIHAERFVQEYVKATKLGAAENFKKFYRNLDALLIDDIQFFAGKELTQEEFFNTFNNLFEGEKQIILTSDRYPREIEKIEDRLKSRFSWGLSVAIEPPELETRVAILMKKAEERGVNLAEEVAFFIGQKLRTHVRELEGALNRVIANAEFTGKTITIDFVRDTLKDMLALQDKLVTIDNIQKVVAEYYRIKVSDLNSKNRSRSVARPRQLAMALAKELTNRSFPEIGKNFGGKDHTTVIYACDKIQELRETDSSIQEDWSNLIRTLSA</sequence>
<dbReference type="EMBL" id="CP000746">
    <property type="protein sequence ID" value="ABR73383.1"/>
    <property type="molecule type" value="Genomic_DNA"/>
</dbReference>
<dbReference type="RefSeq" id="WP_011978660.1">
    <property type="nucleotide sequence ID" value="NC_009655.1"/>
</dbReference>
<dbReference type="SMR" id="A6VK86"/>
<dbReference type="STRING" id="339671.Asuc_0001"/>
<dbReference type="KEGG" id="asu:Asuc_0001"/>
<dbReference type="eggNOG" id="COG0593">
    <property type="taxonomic scope" value="Bacteria"/>
</dbReference>
<dbReference type="HOGENOM" id="CLU_026910_0_1_6"/>
<dbReference type="OrthoDB" id="9807019at2"/>
<dbReference type="Proteomes" id="UP000001114">
    <property type="component" value="Chromosome"/>
</dbReference>
<dbReference type="GO" id="GO:0005737">
    <property type="term" value="C:cytoplasm"/>
    <property type="evidence" value="ECO:0007669"/>
    <property type="project" value="UniProtKB-SubCell"/>
</dbReference>
<dbReference type="GO" id="GO:0005886">
    <property type="term" value="C:plasma membrane"/>
    <property type="evidence" value="ECO:0007669"/>
    <property type="project" value="TreeGrafter"/>
</dbReference>
<dbReference type="GO" id="GO:0005524">
    <property type="term" value="F:ATP binding"/>
    <property type="evidence" value="ECO:0007669"/>
    <property type="project" value="UniProtKB-UniRule"/>
</dbReference>
<dbReference type="GO" id="GO:0016887">
    <property type="term" value="F:ATP hydrolysis activity"/>
    <property type="evidence" value="ECO:0007669"/>
    <property type="project" value="InterPro"/>
</dbReference>
<dbReference type="GO" id="GO:0003688">
    <property type="term" value="F:DNA replication origin binding"/>
    <property type="evidence" value="ECO:0007669"/>
    <property type="project" value="UniProtKB-UniRule"/>
</dbReference>
<dbReference type="GO" id="GO:0008289">
    <property type="term" value="F:lipid binding"/>
    <property type="evidence" value="ECO:0007669"/>
    <property type="project" value="UniProtKB-KW"/>
</dbReference>
<dbReference type="GO" id="GO:0006270">
    <property type="term" value="P:DNA replication initiation"/>
    <property type="evidence" value="ECO:0007669"/>
    <property type="project" value="UniProtKB-UniRule"/>
</dbReference>
<dbReference type="GO" id="GO:0006275">
    <property type="term" value="P:regulation of DNA replication"/>
    <property type="evidence" value="ECO:0007669"/>
    <property type="project" value="UniProtKB-UniRule"/>
</dbReference>
<dbReference type="CDD" id="cd00009">
    <property type="entry name" value="AAA"/>
    <property type="match status" value="1"/>
</dbReference>
<dbReference type="CDD" id="cd06571">
    <property type="entry name" value="Bac_DnaA_C"/>
    <property type="match status" value="1"/>
</dbReference>
<dbReference type="FunFam" id="1.10.8.60:FF:000003">
    <property type="entry name" value="Chromosomal replication initiator protein DnaA"/>
    <property type="match status" value="1"/>
</dbReference>
<dbReference type="FunFam" id="3.40.50.300:FF:000668">
    <property type="entry name" value="Chromosomal replication initiator protein DnaA"/>
    <property type="match status" value="1"/>
</dbReference>
<dbReference type="Gene3D" id="1.10.1750.10">
    <property type="match status" value="1"/>
</dbReference>
<dbReference type="Gene3D" id="1.10.8.60">
    <property type="match status" value="1"/>
</dbReference>
<dbReference type="Gene3D" id="3.30.300.180">
    <property type="match status" value="1"/>
</dbReference>
<dbReference type="Gene3D" id="3.40.50.300">
    <property type="entry name" value="P-loop containing nucleotide triphosphate hydrolases"/>
    <property type="match status" value="1"/>
</dbReference>
<dbReference type="HAMAP" id="MF_00377">
    <property type="entry name" value="DnaA_bact"/>
    <property type="match status" value="1"/>
</dbReference>
<dbReference type="InterPro" id="IPR003593">
    <property type="entry name" value="AAA+_ATPase"/>
</dbReference>
<dbReference type="InterPro" id="IPR001957">
    <property type="entry name" value="Chromosome_initiator_DnaA"/>
</dbReference>
<dbReference type="InterPro" id="IPR020591">
    <property type="entry name" value="Chromosome_initiator_DnaA-like"/>
</dbReference>
<dbReference type="InterPro" id="IPR018312">
    <property type="entry name" value="Chromosome_initiator_DnaA_CS"/>
</dbReference>
<dbReference type="InterPro" id="IPR013159">
    <property type="entry name" value="DnaA_C"/>
</dbReference>
<dbReference type="InterPro" id="IPR013317">
    <property type="entry name" value="DnaA_dom"/>
</dbReference>
<dbReference type="InterPro" id="IPR024633">
    <property type="entry name" value="DnaA_N_dom"/>
</dbReference>
<dbReference type="InterPro" id="IPR038454">
    <property type="entry name" value="DnaA_N_sf"/>
</dbReference>
<dbReference type="InterPro" id="IPR055199">
    <property type="entry name" value="Hda_lid"/>
</dbReference>
<dbReference type="InterPro" id="IPR027417">
    <property type="entry name" value="P-loop_NTPase"/>
</dbReference>
<dbReference type="InterPro" id="IPR010921">
    <property type="entry name" value="Trp_repressor/repl_initiator"/>
</dbReference>
<dbReference type="NCBIfam" id="TIGR00362">
    <property type="entry name" value="DnaA"/>
    <property type="match status" value="1"/>
</dbReference>
<dbReference type="PANTHER" id="PTHR30050">
    <property type="entry name" value="CHROMOSOMAL REPLICATION INITIATOR PROTEIN DNAA"/>
    <property type="match status" value="1"/>
</dbReference>
<dbReference type="PANTHER" id="PTHR30050:SF2">
    <property type="entry name" value="CHROMOSOMAL REPLICATION INITIATOR PROTEIN DNAA"/>
    <property type="match status" value="1"/>
</dbReference>
<dbReference type="Pfam" id="PF00308">
    <property type="entry name" value="Bac_DnaA"/>
    <property type="match status" value="1"/>
</dbReference>
<dbReference type="Pfam" id="PF08299">
    <property type="entry name" value="Bac_DnaA_C"/>
    <property type="match status" value="1"/>
</dbReference>
<dbReference type="Pfam" id="PF11638">
    <property type="entry name" value="DnaA_N"/>
    <property type="match status" value="1"/>
</dbReference>
<dbReference type="Pfam" id="PF22688">
    <property type="entry name" value="Hda_lid"/>
    <property type="match status" value="1"/>
</dbReference>
<dbReference type="PRINTS" id="PR00051">
    <property type="entry name" value="DNAA"/>
</dbReference>
<dbReference type="SMART" id="SM00382">
    <property type="entry name" value="AAA"/>
    <property type="match status" value="1"/>
</dbReference>
<dbReference type="SMART" id="SM00760">
    <property type="entry name" value="Bac_DnaA_C"/>
    <property type="match status" value="1"/>
</dbReference>
<dbReference type="SUPFAM" id="SSF52540">
    <property type="entry name" value="P-loop containing nucleoside triphosphate hydrolases"/>
    <property type="match status" value="1"/>
</dbReference>
<dbReference type="SUPFAM" id="SSF48295">
    <property type="entry name" value="TrpR-like"/>
    <property type="match status" value="1"/>
</dbReference>
<dbReference type="PROSITE" id="PS01008">
    <property type="entry name" value="DNAA"/>
    <property type="match status" value="1"/>
</dbReference>
<organism>
    <name type="scientific">Actinobacillus succinogenes (strain ATCC 55618 / DSM 22257 / CCUG 43843 / 130Z)</name>
    <dbReference type="NCBI Taxonomy" id="339671"/>
    <lineage>
        <taxon>Bacteria</taxon>
        <taxon>Pseudomonadati</taxon>
        <taxon>Pseudomonadota</taxon>
        <taxon>Gammaproteobacteria</taxon>
        <taxon>Pasteurellales</taxon>
        <taxon>Pasteurellaceae</taxon>
        <taxon>Actinobacillus</taxon>
    </lineage>
</organism>
<proteinExistence type="inferred from homology"/>
<comment type="function">
    <text evidence="1">Plays an essential role in the initiation and regulation of chromosomal replication. ATP-DnaA binds to the origin of replication (oriC) to initiate formation of the DNA replication initiation complex once per cell cycle. Binds the DnaA box (a 9 base pair repeat at the origin) and separates the double-stranded (ds)DNA. Forms a right-handed helical filament on oriC DNA; dsDNA binds to the exterior of the filament while single-stranded (ss)DNA is stabiized in the filament's interior. The ATP-DnaA-oriC complex binds and stabilizes one strand of the AT-rich DNA unwinding element (DUE), permitting loading of DNA polymerase. After initiation quickly degrades to an ADP-DnaA complex that is not apt for DNA replication. Binds acidic phospholipids.</text>
</comment>
<comment type="subunit">
    <text evidence="1">Oligomerizes as a right-handed, spiral filament on DNA at oriC.</text>
</comment>
<comment type="subcellular location">
    <subcellularLocation>
        <location evidence="1">Cytoplasm</location>
    </subcellularLocation>
</comment>
<comment type="domain">
    <text evidence="1">Domain I is involved in oligomerization and binding regulators, domain II is flexibile and of varying length in different bacteria, domain III forms the AAA+ region, while domain IV binds dsDNA.</text>
</comment>
<comment type="similarity">
    <text evidence="1">Belongs to the DnaA family.</text>
</comment>
<name>DNAA_ACTSZ</name>
<reference key="1">
    <citation type="journal article" date="2010" name="BMC Genomics">
        <title>A genomic perspective on the potential of Actinobacillus succinogenes for industrial succinate production.</title>
        <authorList>
            <person name="McKinlay J.B."/>
            <person name="Laivenieks M."/>
            <person name="Schindler B.D."/>
            <person name="McKinlay A.A."/>
            <person name="Siddaramappa S."/>
            <person name="Challacombe J.F."/>
            <person name="Lowry S.R."/>
            <person name="Clum A."/>
            <person name="Lapidus A.L."/>
            <person name="Burkhart K.B."/>
            <person name="Harkins V."/>
            <person name="Vieille C."/>
        </authorList>
    </citation>
    <scope>NUCLEOTIDE SEQUENCE [LARGE SCALE GENOMIC DNA]</scope>
    <source>
        <strain>ATCC 55618 / DSM 22257 / CCUG 43843 / 130Z</strain>
    </source>
</reference>
<evidence type="ECO:0000255" key="1">
    <source>
        <dbReference type="HAMAP-Rule" id="MF_00377"/>
    </source>
</evidence>